<protein>
    <recommendedName>
        <fullName evidence="1">Cell cycle protein GpsB</fullName>
    </recommendedName>
    <alternativeName>
        <fullName evidence="1">Guiding PBP1-shuttling protein</fullName>
    </alternativeName>
</protein>
<accession>A6U1R5</accession>
<keyword id="KW-0131">Cell cycle</keyword>
<keyword id="KW-0132">Cell division</keyword>
<keyword id="KW-0133">Cell shape</keyword>
<keyword id="KW-0175">Coiled coil</keyword>
<keyword id="KW-0963">Cytoplasm</keyword>
<reference key="1">
    <citation type="submission" date="2007-06" db="EMBL/GenBank/DDBJ databases">
        <title>Complete sequence of chromosome of Staphylococcus aureus subsp. aureus JH1.</title>
        <authorList>
            <consortium name="US DOE Joint Genome Institute"/>
            <person name="Copeland A."/>
            <person name="Lucas S."/>
            <person name="Lapidus A."/>
            <person name="Barry K."/>
            <person name="Detter J.C."/>
            <person name="Glavina del Rio T."/>
            <person name="Hammon N."/>
            <person name="Israni S."/>
            <person name="Dalin E."/>
            <person name="Tice H."/>
            <person name="Pitluck S."/>
            <person name="Chain P."/>
            <person name="Malfatti S."/>
            <person name="Shin M."/>
            <person name="Vergez L."/>
            <person name="Schmutz J."/>
            <person name="Larimer F."/>
            <person name="Land M."/>
            <person name="Hauser L."/>
            <person name="Kyrpides N."/>
            <person name="Ivanova N."/>
            <person name="Tomasz A."/>
            <person name="Richardson P."/>
        </authorList>
    </citation>
    <scope>NUCLEOTIDE SEQUENCE [LARGE SCALE GENOMIC DNA]</scope>
    <source>
        <strain>JH1</strain>
    </source>
</reference>
<proteinExistence type="inferred from homology"/>
<name>GPSB_STAA2</name>
<gene>
    <name evidence="1" type="primary">gpsB</name>
    <name type="ordered locus">SaurJH1_1534</name>
</gene>
<organism>
    <name type="scientific">Staphylococcus aureus (strain JH1)</name>
    <dbReference type="NCBI Taxonomy" id="359787"/>
    <lineage>
        <taxon>Bacteria</taxon>
        <taxon>Bacillati</taxon>
        <taxon>Bacillota</taxon>
        <taxon>Bacilli</taxon>
        <taxon>Bacillales</taxon>
        <taxon>Staphylococcaceae</taxon>
        <taxon>Staphylococcus</taxon>
    </lineage>
</organism>
<dbReference type="EMBL" id="CP000736">
    <property type="protein sequence ID" value="ABR52383.1"/>
    <property type="molecule type" value="Genomic_DNA"/>
</dbReference>
<dbReference type="SMR" id="A6U1R5"/>
<dbReference type="KEGG" id="sah:SaurJH1_1534"/>
<dbReference type="HOGENOM" id="CLU_140309_1_0_9"/>
<dbReference type="GO" id="GO:0005737">
    <property type="term" value="C:cytoplasm"/>
    <property type="evidence" value="ECO:0007669"/>
    <property type="project" value="UniProtKB-SubCell"/>
</dbReference>
<dbReference type="GO" id="GO:0051301">
    <property type="term" value="P:cell division"/>
    <property type="evidence" value="ECO:0007669"/>
    <property type="project" value="UniProtKB-UniRule"/>
</dbReference>
<dbReference type="GO" id="GO:0008360">
    <property type="term" value="P:regulation of cell shape"/>
    <property type="evidence" value="ECO:0007669"/>
    <property type="project" value="UniProtKB-UniRule"/>
</dbReference>
<dbReference type="Gene3D" id="6.10.250.660">
    <property type="match status" value="1"/>
</dbReference>
<dbReference type="HAMAP" id="MF_02011">
    <property type="entry name" value="GpsB"/>
    <property type="match status" value="1"/>
</dbReference>
<dbReference type="InterPro" id="IPR011229">
    <property type="entry name" value="Cell_cycle_GpsB"/>
</dbReference>
<dbReference type="InterPro" id="IPR019933">
    <property type="entry name" value="DivIVA_domain"/>
</dbReference>
<dbReference type="InterPro" id="IPR007793">
    <property type="entry name" value="DivIVA_fam"/>
</dbReference>
<dbReference type="NCBIfam" id="TIGR03544">
    <property type="entry name" value="DivI1A_domain"/>
    <property type="match status" value="1"/>
</dbReference>
<dbReference type="NCBIfam" id="NF010725">
    <property type="entry name" value="PRK14127.1"/>
    <property type="match status" value="1"/>
</dbReference>
<dbReference type="PANTHER" id="PTHR35794:SF1">
    <property type="entry name" value="CELL CYCLE PROTEIN GPSB"/>
    <property type="match status" value="1"/>
</dbReference>
<dbReference type="PANTHER" id="PTHR35794">
    <property type="entry name" value="CELL DIVISION PROTEIN DIVIVA"/>
    <property type="match status" value="1"/>
</dbReference>
<dbReference type="Pfam" id="PF05103">
    <property type="entry name" value="DivIVA"/>
    <property type="match status" value="1"/>
</dbReference>
<dbReference type="PIRSF" id="PIRSF029938">
    <property type="entry name" value="UCP029938"/>
    <property type="match status" value="1"/>
</dbReference>
<comment type="function">
    <text evidence="1">Divisome component that associates with the complex late in its assembly, after the Z-ring is formed, and is dependent on DivIC and PBP2B for its recruitment to the divisome. Together with EzrA, is a key component of the system that regulates PBP1 localization during cell cycle progression. Its main role could be the removal of PBP1 from the cell pole after pole maturation is completed. Also contributes to the recruitment of PBP1 to the division complex. Not essential for septum formation.</text>
</comment>
<comment type="subunit">
    <text evidence="1">Forms polymers through the coiled coil domains. Interacts with PBP1, MreC and EzrA.</text>
</comment>
<comment type="subcellular location">
    <subcellularLocation>
        <location evidence="1">Cytoplasm</location>
    </subcellularLocation>
    <text evidence="1">Shuttles between the lateral wall and the division site in a cell cycle-dependent manner.</text>
</comment>
<comment type="similarity">
    <text evidence="1">Belongs to the GpsB family.</text>
</comment>
<sequence>MSDVSLKLSAKDIYEKDFEKTMARGYRREEVDAFLDDIIADYQKMADMNNEVVKLSEENHKLKKELEELRLRVATSRPQDNKSFSSNNTTTNTSSNNVDILKRISNLEKAVFGK</sequence>
<feature type="chain" id="PRO_0000337933" description="Cell cycle protein GpsB">
    <location>
        <begin position="1"/>
        <end position="114"/>
    </location>
</feature>
<feature type="region of interest" description="Disordered" evidence="2">
    <location>
        <begin position="74"/>
        <end position="99"/>
    </location>
</feature>
<feature type="coiled-coil region" evidence="1">
    <location>
        <begin position="42"/>
        <end position="77"/>
    </location>
</feature>
<feature type="compositionally biased region" description="Low complexity" evidence="2">
    <location>
        <begin position="85"/>
        <end position="97"/>
    </location>
</feature>
<evidence type="ECO:0000255" key="1">
    <source>
        <dbReference type="HAMAP-Rule" id="MF_02011"/>
    </source>
</evidence>
<evidence type="ECO:0000256" key="2">
    <source>
        <dbReference type="SAM" id="MobiDB-lite"/>
    </source>
</evidence>